<evidence type="ECO:0000250" key="1"/>
<evidence type="ECO:0000250" key="2">
    <source>
        <dbReference type="UniProtKB" id="P29022"/>
    </source>
</evidence>
<evidence type="ECO:0000255" key="3"/>
<evidence type="ECO:0000269" key="4">
    <source>
    </source>
</evidence>
<evidence type="ECO:0000305" key="5"/>
<organism>
    <name type="scientific">Oryza sativa subsp. japonica</name>
    <name type="common">Rice</name>
    <dbReference type="NCBI Taxonomy" id="39947"/>
    <lineage>
        <taxon>Eukaryota</taxon>
        <taxon>Viridiplantae</taxon>
        <taxon>Streptophyta</taxon>
        <taxon>Embryophyta</taxon>
        <taxon>Tracheophyta</taxon>
        <taxon>Spermatophyta</taxon>
        <taxon>Magnoliopsida</taxon>
        <taxon>Liliopsida</taxon>
        <taxon>Poales</taxon>
        <taxon>Poaceae</taxon>
        <taxon>BOP clade</taxon>
        <taxon>Oryzoideae</taxon>
        <taxon>Oryzeae</taxon>
        <taxon>Oryzinae</taxon>
        <taxon>Oryza</taxon>
        <taxon>Oryza sativa</taxon>
    </lineage>
</organism>
<name>CHI11_ORYSJ</name>
<accession>Q10S66</accession>
<accession>A0A0P0VST5</accession>
<keyword id="KW-0119">Carbohydrate metabolism</keyword>
<keyword id="KW-1015">Disulfide bond</keyword>
<keyword id="KW-0326">Glycosidase</keyword>
<keyword id="KW-0378">Hydrolase</keyword>
<keyword id="KW-0624">Polysaccharide degradation</keyword>
<keyword id="KW-1185">Reference proteome</keyword>
<keyword id="KW-0732">Signal</keyword>
<gene>
    <name type="primary">Cht11</name>
    <name type="synonym">MIRCH38</name>
    <name type="ordered locus">Os03g0132900</name>
    <name type="ordered locus">LOC_Os03g04060</name>
    <name type="ORF">OsJ_09305</name>
</gene>
<sequence length="256" mass="27748">MRRLLPLAGATLLIAAAGGASGQQAGVGSIITRAMFESMLSHRGDQGCQGAFYTYDAFIKAAGDFPRFGTTGNDETRRRELAAFFGQTSHETTGGWATAPDGPFAWGYCRVNEITPSDPPYYGRGPIQLTHKYNYQLAGDALGLDLVNNPDLVSSDPVVAFRTAIWFWMTAQSPKPSCHDVITNQWTPSGDDRSSGRLPGYGMATNIINGGEECGKGYSTDNAKDRVGYYKRYCDMFRVGYGDNIACRDQKPYGGG</sequence>
<protein>
    <recommendedName>
        <fullName>Chitinase 11</fullName>
        <ecNumber>3.2.1.14</ecNumber>
    </recommendedName>
    <alternativeName>
        <fullName>Pathogenesis related (PR)-3 chitinase 11</fullName>
    </alternativeName>
</protein>
<reference key="1">
    <citation type="journal article" date="2005" name="Genome Res.">
        <title>Sequence, annotation, and analysis of synteny between rice chromosome 3 and diverged grass species.</title>
        <authorList>
            <consortium name="The rice chromosome 3 sequencing consortium"/>
            <person name="Buell C.R."/>
            <person name="Yuan Q."/>
            <person name="Ouyang S."/>
            <person name="Liu J."/>
            <person name="Zhu W."/>
            <person name="Wang A."/>
            <person name="Maiti R."/>
            <person name="Haas B."/>
            <person name="Wortman J."/>
            <person name="Pertea M."/>
            <person name="Jones K.M."/>
            <person name="Kim M."/>
            <person name="Overton L."/>
            <person name="Tsitrin T."/>
            <person name="Fadrosh D."/>
            <person name="Bera J."/>
            <person name="Weaver B."/>
            <person name="Jin S."/>
            <person name="Johri S."/>
            <person name="Reardon M."/>
            <person name="Webb K."/>
            <person name="Hill J."/>
            <person name="Moffat K."/>
            <person name="Tallon L."/>
            <person name="Van Aken S."/>
            <person name="Lewis M."/>
            <person name="Utterback T."/>
            <person name="Feldblyum T."/>
            <person name="Zismann V."/>
            <person name="Iobst S."/>
            <person name="Hsiao J."/>
            <person name="de Vazeille A.R."/>
            <person name="Salzberg S.L."/>
            <person name="White O."/>
            <person name="Fraser C.M."/>
            <person name="Yu Y."/>
            <person name="Kim H."/>
            <person name="Rambo T."/>
            <person name="Currie J."/>
            <person name="Collura K."/>
            <person name="Kernodle-Thompson S."/>
            <person name="Wei F."/>
            <person name="Kudrna K."/>
            <person name="Ammiraju J.S.S."/>
            <person name="Luo M."/>
            <person name="Goicoechea J.L."/>
            <person name="Wing R.A."/>
            <person name="Henry D."/>
            <person name="Oates R."/>
            <person name="Palmer M."/>
            <person name="Pries G."/>
            <person name="Saski C."/>
            <person name="Simmons J."/>
            <person name="Soderlund C."/>
            <person name="Nelson W."/>
            <person name="de la Bastide M."/>
            <person name="Spiegel L."/>
            <person name="Nascimento L."/>
            <person name="Huang E."/>
            <person name="Preston R."/>
            <person name="Zutavern T."/>
            <person name="Palmer L."/>
            <person name="O'Shaughnessy A."/>
            <person name="Dike S."/>
            <person name="McCombie W.R."/>
            <person name="Minx P."/>
            <person name="Cordum H."/>
            <person name="Wilson R."/>
            <person name="Jin W."/>
            <person name="Lee H.R."/>
            <person name="Jiang J."/>
            <person name="Jackson S."/>
        </authorList>
    </citation>
    <scope>NUCLEOTIDE SEQUENCE [LARGE SCALE GENOMIC DNA]</scope>
    <source>
        <strain>cv. Nipponbare</strain>
    </source>
</reference>
<reference key="2">
    <citation type="journal article" date="2005" name="Nature">
        <title>The map-based sequence of the rice genome.</title>
        <authorList>
            <consortium name="International rice genome sequencing project (IRGSP)"/>
        </authorList>
    </citation>
    <scope>NUCLEOTIDE SEQUENCE [LARGE SCALE GENOMIC DNA]</scope>
    <source>
        <strain>cv. Nipponbare</strain>
    </source>
</reference>
<reference key="3">
    <citation type="journal article" date="2008" name="Nucleic Acids Res.">
        <title>The rice annotation project database (RAP-DB): 2008 update.</title>
        <authorList>
            <consortium name="The rice annotation project (RAP)"/>
        </authorList>
    </citation>
    <scope>GENOME REANNOTATION</scope>
    <source>
        <strain>cv. Nipponbare</strain>
    </source>
</reference>
<reference key="4">
    <citation type="journal article" date="2013" name="Rice">
        <title>Improvement of the Oryza sativa Nipponbare reference genome using next generation sequence and optical map data.</title>
        <authorList>
            <person name="Kawahara Y."/>
            <person name="de la Bastide M."/>
            <person name="Hamilton J.P."/>
            <person name="Kanamori H."/>
            <person name="McCombie W.R."/>
            <person name="Ouyang S."/>
            <person name="Schwartz D.C."/>
            <person name="Tanaka T."/>
            <person name="Wu J."/>
            <person name="Zhou S."/>
            <person name="Childs K.L."/>
            <person name="Davidson R.M."/>
            <person name="Lin H."/>
            <person name="Quesada-Ocampo L."/>
            <person name="Vaillancourt B."/>
            <person name="Sakai H."/>
            <person name="Lee S.S."/>
            <person name="Kim J."/>
            <person name="Numa H."/>
            <person name="Itoh T."/>
            <person name="Buell C.R."/>
            <person name="Matsumoto T."/>
        </authorList>
    </citation>
    <scope>GENOME REANNOTATION</scope>
    <source>
        <strain>cv. Nipponbare</strain>
    </source>
</reference>
<reference key="5">
    <citation type="journal article" date="2005" name="PLoS Biol.">
        <title>The genomes of Oryza sativa: a history of duplications.</title>
        <authorList>
            <person name="Yu J."/>
            <person name="Wang J."/>
            <person name="Lin W."/>
            <person name="Li S."/>
            <person name="Li H."/>
            <person name="Zhou J."/>
            <person name="Ni P."/>
            <person name="Dong W."/>
            <person name="Hu S."/>
            <person name="Zeng C."/>
            <person name="Zhang J."/>
            <person name="Zhang Y."/>
            <person name="Li R."/>
            <person name="Xu Z."/>
            <person name="Li S."/>
            <person name="Li X."/>
            <person name="Zheng H."/>
            <person name="Cong L."/>
            <person name="Lin L."/>
            <person name="Yin J."/>
            <person name="Geng J."/>
            <person name="Li G."/>
            <person name="Shi J."/>
            <person name="Liu J."/>
            <person name="Lv H."/>
            <person name="Li J."/>
            <person name="Wang J."/>
            <person name="Deng Y."/>
            <person name="Ran L."/>
            <person name="Shi X."/>
            <person name="Wang X."/>
            <person name="Wu Q."/>
            <person name="Li C."/>
            <person name="Ren X."/>
            <person name="Wang J."/>
            <person name="Wang X."/>
            <person name="Li D."/>
            <person name="Liu D."/>
            <person name="Zhang X."/>
            <person name="Ji Z."/>
            <person name="Zhao W."/>
            <person name="Sun Y."/>
            <person name="Zhang Z."/>
            <person name="Bao J."/>
            <person name="Han Y."/>
            <person name="Dong L."/>
            <person name="Ji J."/>
            <person name="Chen P."/>
            <person name="Wu S."/>
            <person name="Liu J."/>
            <person name="Xiao Y."/>
            <person name="Bu D."/>
            <person name="Tan J."/>
            <person name="Yang L."/>
            <person name="Ye C."/>
            <person name="Zhang J."/>
            <person name="Xu J."/>
            <person name="Zhou Y."/>
            <person name="Yu Y."/>
            <person name="Zhang B."/>
            <person name="Zhuang S."/>
            <person name="Wei H."/>
            <person name="Liu B."/>
            <person name="Lei M."/>
            <person name="Yu H."/>
            <person name="Li Y."/>
            <person name="Xu H."/>
            <person name="Wei S."/>
            <person name="He X."/>
            <person name="Fang L."/>
            <person name="Zhang Z."/>
            <person name="Zhang Y."/>
            <person name="Huang X."/>
            <person name="Su Z."/>
            <person name="Tong W."/>
            <person name="Li J."/>
            <person name="Tong Z."/>
            <person name="Li S."/>
            <person name="Ye J."/>
            <person name="Wang L."/>
            <person name="Fang L."/>
            <person name="Lei T."/>
            <person name="Chen C.-S."/>
            <person name="Chen H.-C."/>
            <person name="Xu Z."/>
            <person name="Li H."/>
            <person name="Huang H."/>
            <person name="Zhang F."/>
            <person name="Xu H."/>
            <person name="Li N."/>
            <person name="Zhao C."/>
            <person name="Li S."/>
            <person name="Dong L."/>
            <person name="Huang Y."/>
            <person name="Li L."/>
            <person name="Xi Y."/>
            <person name="Qi Q."/>
            <person name="Li W."/>
            <person name="Zhang B."/>
            <person name="Hu W."/>
            <person name="Zhang Y."/>
            <person name="Tian X."/>
            <person name="Jiao Y."/>
            <person name="Liang X."/>
            <person name="Jin J."/>
            <person name="Gao L."/>
            <person name="Zheng W."/>
            <person name="Hao B."/>
            <person name="Liu S.-M."/>
            <person name="Wang W."/>
            <person name="Yuan L."/>
            <person name="Cao M."/>
            <person name="McDermott J."/>
            <person name="Samudrala R."/>
            <person name="Wang J."/>
            <person name="Wong G.K.-S."/>
            <person name="Yang H."/>
        </authorList>
    </citation>
    <scope>NUCLEOTIDE SEQUENCE [LARGE SCALE GENOMIC DNA]</scope>
    <source>
        <strain>cv. Nipponbare</strain>
    </source>
</reference>
<reference key="6">
    <citation type="journal article" date="2003" name="Science">
        <title>Collection, mapping, and annotation of over 28,000 cDNA clones from japonica rice.</title>
        <authorList>
            <consortium name="The rice full-length cDNA consortium"/>
        </authorList>
    </citation>
    <scope>NUCLEOTIDE SEQUENCE [LARGE SCALE MRNA]</scope>
    <source>
        <strain>cv. Nipponbare</strain>
    </source>
</reference>
<reference key="7">
    <citation type="journal article" date="2006" name="Genome">
        <title>Distribution, structure, organ-specific expression, and phylogenic analysis of the pathogenesis-related protein-3 chitinase gene family in rice (Oryza sativa L.).</title>
        <authorList>
            <person name="Nakazaki T."/>
            <person name="Tsukiyama T."/>
            <person name="Okumoto Y."/>
            <person name="Kageyama D."/>
            <person name="Naito K."/>
            <person name="Inouye K."/>
            <person name="Tanisaka T."/>
        </authorList>
    </citation>
    <scope>GENE FAMILY</scope>
    <scope>NOMENCLATURE</scope>
    <scope>TISSUE SPECIFICITY</scope>
</reference>
<dbReference type="EC" id="3.2.1.14"/>
<dbReference type="EMBL" id="DP000009">
    <property type="protein sequence ID" value="ABF93828.1"/>
    <property type="molecule type" value="Genomic_DNA"/>
</dbReference>
<dbReference type="EMBL" id="AP008209">
    <property type="protein sequence ID" value="BAF10785.1"/>
    <property type="molecule type" value="Genomic_DNA"/>
</dbReference>
<dbReference type="EMBL" id="AP014959">
    <property type="protein sequence ID" value="BAS82154.1"/>
    <property type="molecule type" value="Genomic_DNA"/>
</dbReference>
<dbReference type="EMBL" id="CM000140">
    <property type="protein sequence ID" value="EAZ25482.1"/>
    <property type="molecule type" value="Genomic_DNA"/>
</dbReference>
<dbReference type="EMBL" id="AK059871">
    <property type="protein sequence ID" value="BAG87180.1"/>
    <property type="molecule type" value="mRNA"/>
</dbReference>
<dbReference type="EMBL" id="AK099355">
    <property type="protein sequence ID" value="BAG94083.1"/>
    <property type="molecule type" value="mRNA"/>
</dbReference>
<dbReference type="RefSeq" id="XP_015630175.1">
    <property type="nucleotide sequence ID" value="XM_015774689.1"/>
</dbReference>
<dbReference type="SMR" id="Q10S66"/>
<dbReference type="FunCoup" id="Q10S66">
    <property type="interactions" value="253"/>
</dbReference>
<dbReference type="STRING" id="39947.Q10S66"/>
<dbReference type="CAZy" id="GH19">
    <property type="family name" value="Glycoside Hydrolase Family 19"/>
</dbReference>
<dbReference type="PaxDb" id="39947-Q10S66"/>
<dbReference type="EnsemblPlants" id="Os03t0132900-01">
    <property type="protein sequence ID" value="Os03t0132900-01"/>
    <property type="gene ID" value="Os03g0132900"/>
</dbReference>
<dbReference type="Gramene" id="Os03t0132900-01">
    <property type="protein sequence ID" value="Os03t0132900-01"/>
    <property type="gene ID" value="Os03g0132900"/>
</dbReference>
<dbReference type="KEGG" id="dosa:Os03g0132900"/>
<dbReference type="eggNOG" id="KOG4742">
    <property type="taxonomic scope" value="Eukaryota"/>
</dbReference>
<dbReference type="HOGENOM" id="CLU_045506_4_0_1"/>
<dbReference type="InParanoid" id="Q10S66"/>
<dbReference type="OMA" id="CKDQKPY"/>
<dbReference type="OrthoDB" id="5985073at2759"/>
<dbReference type="Proteomes" id="UP000000763">
    <property type="component" value="Chromosome 3"/>
</dbReference>
<dbReference type="Proteomes" id="UP000007752">
    <property type="component" value="Chromosome 3"/>
</dbReference>
<dbReference type="Proteomes" id="UP000059680">
    <property type="component" value="Chromosome 3"/>
</dbReference>
<dbReference type="GO" id="GO:0004568">
    <property type="term" value="F:chitinase activity"/>
    <property type="evidence" value="ECO:0000318"/>
    <property type="project" value="GO_Central"/>
</dbReference>
<dbReference type="GO" id="GO:0008843">
    <property type="term" value="F:endochitinase activity"/>
    <property type="evidence" value="ECO:0007669"/>
    <property type="project" value="UniProtKB-EC"/>
</dbReference>
<dbReference type="GO" id="GO:0016998">
    <property type="term" value="P:cell wall macromolecule catabolic process"/>
    <property type="evidence" value="ECO:0007669"/>
    <property type="project" value="InterPro"/>
</dbReference>
<dbReference type="GO" id="GO:0006032">
    <property type="term" value="P:chitin catabolic process"/>
    <property type="evidence" value="ECO:0007669"/>
    <property type="project" value="InterPro"/>
</dbReference>
<dbReference type="GO" id="GO:0050832">
    <property type="term" value="P:defense response to fungus"/>
    <property type="evidence" value="ECO:0000318"/>
    <property type="project" value="GO_Central"/>
</dbReference>
<dbReference type="GO" id="GO:0000272">
    <property type="term" value="P:polysaccharide catabolic process"/>
    <property type="evidence" value="ECO:0007669"/>
    <property type="project" value="UniProtKB-KW"/>
</dbReference>
<dbReference type="CDD" id="cd00325">
    <property type="entry name" value="chitinase_GH19"/>
    <property type="match status" value="1"/>
</dbReference>
<dbReference type="FunFam" id="3.30.20.10:FF:000002">
    <property type="entry name" value="Acidic endochitinase pcht28"/>
    <property type="match status" value="1"/>
</dbReference>
<dbReference type="Gene3D" id="1.10.530.10">
    <property type="match status" value="1"/>
</dbReference>
<dbReference type="Gene3D" id="3.30.20.10">
    <property type="entry name" value="Endochitinase, domain 2"/>
    <property type="match status" value="1"/>
</dbReference>
<dbReference type="InterPro" id="IPR016283">
    <property type="entry name" value="Glyco_hydro_19"/>
</dbReference>
<dbReference type="InterPro" id="IPR000726">
    <property type="entry name" value="Glyco_hydro_19_cat"/>
</dbReference>
<dbReference type="InterPro" id="IPR023346">
    <property type="entry name" value="Lysozyme-like_dom_sf"/>
</dbReference>
<dbReference type="PANTHER" id="PTHR22595:SF45">
    <property type="entry name" value="CHITINASE 11"/>
    <property type="match status" value="1"/>
</dbReference>
<dbReference type="PANTHER" id="PTHR22595">
    <property type="entry name" value="CHITINASE-RELATED"/>
    <property type="match status" value="1"/>
</dbReference>
<dbReference type="Pfam" id="PF00182">
    <property type="entry name" value="Glyco_hydro_19"/>
    <property type="match status" value="1"/>
</dbReference>
<dbReference type="PIRSF" id="PIRSF001060">
    <property type="entry name" value="Endochitinase"/>
    <property type="match status" value="1"/>
</dbReference>
<dbReference type="SUPFAM" id="SSF53955">
    <property type="entry name" value="Lysozyme-like"/>
    <property type="match status" value="1"/>
</dbReference>
<dbReference type="PROSITE" id="PS00774">
    <property type="entry name" value="CHITINASE_19_2"/>
    <property type="match status" value="1"/>
</dbReference>
<proteinExistence type="evidence at transcript level"/>
<comment type="catalytic activity">
    <reaction>
        <text>Random endo-hydrolysis of N-acetyl-beta-D-glucosaminide (1-&gt;4)-beta-linkages in chitin and chitodextrins.</text>
        <dbReference type="EC" id="3.2.1.14"/>
    </reaction>
</comment>
<comment type="tissue specificity">
    <text evidence="4">Expressed in leaves and at lower levels in roots, sheaths and meristems.</text>
</comment>
<comment type="similarity">
    <text evidence="5">Belongs to the glycosyl hydrolase 19 family. Chitinase class II subfamily.</text>
</comment>
<comment type="caution">
    <text evidence="5">Lacks the chitin binding type-1 domain which is one of the conserved features of the chitinase class I and class IV subfamilies.</text>
</comment>
<feature type="signal peptide" evidence="3">
    <location>
        <begin position="1"/>
        <end position="22"/>
    </location>
</feature>
<feature type="chain" id="PRO_0000383471" description="Chitinase 11">
    <location>
        <begin position="23"/>
        <end position="256"/>
    </location>
</feature>
<feature type="active site" description="Proton donor" evidence="2">
    <location>
        <position position="91"/>
    </location>
</feature>
<feature type="disulfide bond" evidence="1">
    <location>
        <begin position="48"/>
        <end position="109"/>
    </location>
</feature>
<feature type="disulfide bond" evidence="1">
    <location>
        <begin position="214"/>
        <end position="247"/>
    </location>
</feature>